<keyword id="KW-0012">Acyltransferase</keyword>
<keyword id="KW-0378">Hydrolase</keyword>
<keyword id="KW-1185">Reference proteome</keyword>
<keyword id="KW-0808">Transferase</keyword>
<sequence length="418" mass="45973">MSDFDALLANYTSKETPKVHGVICKCVDRHGICPTPHLAKRDLRLTLLGNEIYSKVAGYDSVLPGASPLREDVVLKVASATKLITSIALLQCIDKGLIDLDEPVTKVLPEFDQKQILTDVSGSDLVLEPSKTPITARHLLTHTSGLGYPFTHRLLRLRAEVRNRAGVSPSLRVTERYEMPLVFEPGTGWLYGCSLDWAGVIVSRLHGGISLEQYFVENIWQRLGLSEPFPCFNIARHPEYNARVMGGAIQTPEGRLQPKDHWAFDNPEDQDGGSGLSCTTKDYVAVLADLVSDSPKLLKPATIAEMFTPQLEAKSPGVQMLLGLRPAWDTVSGPIAENAINHGLGGVLCMDDVPEIDQPKGMLGWGGASNIVWWVNRELRVAGFFATQQAPFGNPSVTRLVNAWKKDFWAQFKTIDHA</sequence>
<dbReference type="EC" id="2.3.1.-" evidence="7"/>
<dbReference type="EMBL" id="MDYL01000013">
    <property type="status" value="NOT_ANNOTATED_CDS"/>
    <property type="molecule type" value="Genomic_DNA"/>
</dbReference>
<dbReference type="SMR" id="P0CU81"/>
<dbReference type="STRING" id="69771.P0CU81"/>
<dbReference type="Proteomes" id="UP000191522">
    <property type="component" value="Unassembled WGS sequence"/>
</dbReference>
<dbReference type="GO" id="GO:0016746">
    <property type="term" value="F:acyltransferase activity"/>
    <property type="evidence" value="ECO:0007669"/>
    <property type="project" value="UniProtKB-KW"/>
</dbReference>
<dbReference type="GO" id="GO:0016787">
    <property type="term" value="F:hydrolase activity"/>
    <property type="evidence" value="ECO:0007669"/>
    <property type="project" value="UniProtKB-KW"/>
</dbReference>
<dbReference type="Gene3D" id="3.40.710.10">
    <property type="entry name" value="DD-peptidase/beta-lactamase superfamily"/>
    <property type="match status" value="1"/>
</dbReference>
<dbReference type="InterPro" id="IPR001466">
    <property type="entry name" value="Beta-lactam-related"/>
</dbReference>
<dbReference type="InterPro" id="IPR012338">
    <property type="entry name" value="Beta-lactam/transpept-like"/>
</dbReference>
<dbReference type="InterPro" id="IPR050789">
    <property type="entry name" value="Diverse_Enzym_Activities"/>
</dbReference>
<dbReference type="PANTHER" id="PTHR43283:SF17">
    <property type="entry name" value="(LOVD), PUTATIVE (AFU_ORTHOLOGUE AFUA_5G00920)-RELATED"/>
    <property type="match status" value="1"/>
</dbReference>
<dbReference type="PANTHER" id="PTHR43283">
    <property type="entry name" value="BETA-LACTAMASE-RELATED"/>
    <property type="match status" value="1"/>
</dbReference>
<dbReference type="Pfam" id="PF00144">
    <property type="entry name" value="Beta-lactamase"/>
    <property type="match status" value="1"/>
</dbReference>
<dbReference type="SUPFAM" id="SSF56601">
    <property type="entry name" value="beta-lactamase/transpeptidase-like"/>
    <property type="match status" value="1"/>
</dbReference>
<accession>P0CU81</accession>
<comment type="function">
    <text evidence="3 7">Acyltransferase; part of the gene cluster that mediates the biosynthesis of calbistrin A and related compounds. Calbistrin A is a secondary metabolite with an interesting structure that was recently found to have bioactivity against leukemia cells. It consists of two polyketides linked by an ester bond: a bicyclic decalin containing polyketide and a linear 12 carbon dioic acid structure (PubMed:30598828). The polyketide synthase calA is probably responsible for forming the decalin moiety. Because calA lacks a designated enoylreductase (ER) domain, the required activity is provided by the trans-enoyl reductase calK (PubMed:30598828). Following release from the PKS, calF then probably catalyzes the oxidation and the subsequent Diels Alder cycloisomerization that lead to the formation of the decalin moiety (Probable). The decalin polyketide backbone includes two C-methyl groups, at C7 and C11 in backbone, of which the C7 position is probably methylated by the methyltransferase domain of calA. A candidate for adding the methyl group at C11, if not done by CalA, is the cluster methyltransferase calH (Probable). Several additional tailoring enzymes within the cluster could be involved in the modification of the decalin polyketide product. Those include the 3 cytochrome P450 monooxygenases CalE, CalG and CalL, of which one might be responsible for the introduction of the extra hydroxyl group attached to the backbone of the decalin moiety, at position C9 in the backbone, that allows for attachment of the linear moiety (Probable). One tailoring enzyme activity that is expected to be involved in biosynthesis of calbistrin is an acyltransferase for connecting the two polyketide synthase products, and which could be performed by the cluster acyltransferase calJ (Probable). The enzyme responsible for the biosynthesis of the linear moiety, probably a second PKS, has not been identified yet (Probable).</text>
</comment>
<comment type="pathway">
    <text evidence="7">Secondary metabolite biosynthesis.</text>
</comment>
<comment type="induction">
    <text evidence="3">Expression is induced in complex medium (Czapek yeast autolysate medium) supporting calbistrin production.</text>
</comment>
<comment type="biotechnology">
    <text evidence="2 4">Calbistrin A has been reported to possess a number of interesting bioactivities including antifungal active against Candida albicans and cytotoxic toward both healthy and leukemic human cells.</text>
</comment>
<comment type="similarity">
    <text evidence="6">Belongs to the class-A beta-lactamase family.</text>
</comment>
<feature type="chain" id="PRO_0000446486" description="Acyltransferase calJ">
    <location>
        <begin position="1"/>
        <end position="418"/>
    </location>
</feature>
<feature type="active site" description="Acyl-ester intermediate" evidence="1">
    <location>
        <position position="79"/>
    </location>
</feature>
<feature type="binding site" evidence="1">
    <location>
        <position position="176"/>
    </location>
    <ligand>
        <name>substrate</name>
    </ligand>
</feature>
<feature type="binding site" evidence="1">
    <location>
        <position position="191"/>
    </location>
    <ligand>
        <name>substrate</name>
    </ligand>
</feature>
<name>CALJ_PENDC</name>
<organism>
    <name type="scientific">Penicillium decumbens</name>
    <dbReference type="NCBI Taxonomy" id="69771"/>
    <lineage>
        <taxon>Eukaryota</taxon>
        <taxon>Fungi</taxon>
        <taxon>Dikarya</taxon>
        <taxon>Ascomycota</taxon>
        <taxon>Pezizomycotina</taxon>
        <taxon>Eurotiomycetes</taxon>
        <taxon>Eurotiomycetidae</taxon>
        <taxon>Eurotiales</taxon>
        <taxon>Aspergillaceae</taxon>
        <taxon>Penicillium</taxon>
    </lineage>
</organism>
<gene>
    <name evidence="5" type="primary">calJ</name>
</gene>
<proteinExistence type="evidence at protein level"/>
<reference key="1">
    <citation type="journal article" date="2017" name="Nat. Microbiol.">
        <title>Global analysis of biosynthetic gene clusters reveals vast potential of secondary metabolite production in Penicillium species.</title>
        <authorList>
            <person name="Nielsen J.C."/>
            <person name="Grijseels S."/>
            <person name="Prigent S."/>
            <person name="Ji B."/>
            <person name="Dainat J."/>
            <person name="Nielsen K.F."/>
            <person name="Frisvad J.C."/>
            <person name="Workman M."/>
            <person name="Nielsen J."/>
        </authorList>
    </citation>
    <scope>NUCLEOTIDE SEQUENCE [LARGE SCALE GENOMIC DNA]</scope>
    <source>
        <strain>IBT 11843</strain>
    </source>
</reference>
<reference key="2">
    <citation type="journal article" date="1993" name="J. Antibiot.">
        <title>Calbistrins, novel antifungal agents produced by Penicillium restrictum. I. Production, taxonomy of the producing organism and biological activity.</title>
        <authorList>
            <person name="Jackson M."/>
            <person name="Karwowski J.P."/>
            <person name="Humphrey P.E."/>
            <person name="Kohl W.L."/>
            <person name="Barlow G.J."/>
            <person name="Tanaka S.K."/>
        </authorList>
    </citation>
    <scope>BIOTECHNOLOGY</scope>
</reference>
<reference key="3">
    <citation type="journal article" date="2013" name="Molecules">
        <title>Bio-activity and dereplication-based discovery of ophiobolins and other fungal secondary metabolites targeting leukemia cells.</title>
        <authorList>
            <person name="Bladt T.T."/>
            <person name="Duerr C."/>
            <person name="Knudsen P.B."/>
            <person name="Kildgaard S."/>
            <person name="Frisvad J.C."/>
            <person name="Gotfredsen C.H."/>
            <person name="Seiffert M."/>
            <person name="Larsen T.O."/>
        </authorList>
    </citation>
    <scope>BIOTECHNOLOGY</scope>
</reference>
<reference key="4">
    <citation type="journal article" date="2018" name="Fungal Biol. Biotechnol.">
        <title>Identification of the decumbenone biosynthetic gene cluster in Penicillium decumbens and the importance for production of calbistrin.</title>
        <authorList>
            <person name="Grijseels S."/>
            <person name="Pohl C."/>
            <person name="Nielsen J.C."/>
            <person name="Wasil Z."/>
            <person name="Nygaard Y."/>
            <person name="Nielsen J."/>
            <person name="Frisvad J.C."/>
            <person name="Nielsen K.F."/>
            <person name="Workman M."/>
            <person name="Larsen T.O."/>
            <person name="Driessen A.J.M."/>
            <person name="Frandsen R.J.N."/>
        </authorList>
    </citation>
    <scope>IDENTIFICATION</scope>
    <scope>FUNCTION</scope>
    <scope>INDUCTION</scope>
    <scope>PATHWAY</scope>
</reference>
<evidence type="ECO:0000250" key="1">
    <source>
        <dbReference type="UniProtKB" id="Q9Y7D1"/>
    </source>
</evidence>
<evidence type="ECO:0000269" key="2">
    <source>
    </source>
</evidence>
<evidence type="ECO:0000269" key="3">
    <source>
    </source>
</evidence>
<evidence type="ECO:0000269" key="4">
    <source>
    </source>
</evidence>
<evidence type="ECO:0000303" key="5">
    <source>
    </source>
</evidence>
<evidence type="ECO:0000305" key="6"/>
<evidence type="ECO:0000305" key="7">
    <source>
    </source>
</evidence>
<protein>
    <recommendedName>
        <fullName evidence="5">Acyltransferase calJ</fullName>
        <ecNumber evidence="7">2.3.1.-</ecNumber>
    </recommendedName>
    <alternativeName>
        <fullName evidence="5">Calbistrin biosynthesis cluster protein J</fullName>
    </alternativeName>
</protein>